<sequence>MQTEHVILLNAQGVPTGTLEKYAAHTADTLLHLAFSSWLFNAKGQLLVTRRALSKKAWPGVCTNSVCGHPQLGESNEDAVIRRCRYELGVEITPPESIYPDFRYRATDPSGIVENEVCPVFAARTTSALQINDDEVMDYQWCDLADVLHGIDATPWAFSPWMVMQAANSEARKLLSAFAQHN</sequence>
<feature type="chain" id="PRO_1000058571" description="Isopentenyl-diphosphate Delta-isomerase">
    <location>
        <begin position="1"/>
        <end position="182"/>
    </location>
</feature>
<feature type="domain" description="Nudix hydrolase">
    <location>
        <begin position="30"/>
        <end position="164"/>
    </location>
</feature>
<feature type="active site" evidence="1">
    <location>
        <position position="67"/>
    </location>
</feature>
<feature type="active site" evidence="1">
    <location>
        <position position="116"/>
    </location>
</feature>
<feature type="binding site" evidence="1">
    <location>
        <position position="25"/>
    </location>
    <ligand>
        <name>Mn(2+)</name>
        <dbReference type="ChEBI" id="CHEBI:29035"/>
    </ligand>
</feature>
<feature type="binding site" evidence="1">
    <location>
        <position position="32"/>
    </location>
    <ligand>
        <name>Mn(2+)</name>
        <dbReference type="ChEBI" id="CHEBI:29035"/>
    </ligand>
</feature>
<feature type="binding site" evidence="1">
    <location>
        <position position="69"/>
    </location>
    <ligand>
        <name>Mn(2+)</name>
        <dbReference type="ChEBI" id="CHEBI:29035"/>
    </ligand>
</feature>
<feature type="binding site" evidence="1">
    <location>
        <position position="87"/>
    </location>
    <ligand>
        <name>Mg(2+)</name>
        <dbReference type="ChEBI" id="CHEBI:18420"/>
    </ligand>
</feature>
<feature type="binding site" evidence="1">
    <location>
        <position position="114"/>
    </location>
    <ligand>
        <name>Mn(2+)</name>
        <dbReference type="ChEBI" id="CHEBI:29035"/>
    </ligand>
</feature>
<feature type="binding site" evidence="1">
    <location>
        <position position="116"/>
    </location>
    <ligand>
        <name>Mn(2+)</name>
        <dbReference type="ChEBI" id="CHEBI:29035"/>
    </ligand>
</feature>
<protein>
    <recommendedName>
        <fullName evidence="1">Isopentenyl-diphosphate Delta-isomerase</fullName>
        <shortName evidence="1">IPP isomerase</shortName>
        <ecNumber evidence="1">5.3.3.2</ecNumber>
    </recommendedName>
    <alternativeName>
        <fullName evidence="1">IPP:DMAPP isomerase</fullName>
    </alternativeName>
    <alternativeName>
        <fullName evidence="1">Isopentenyl pyrophosphate isomerase</fullName>
    </alternativeName>
</protein>
<dbReference type="EC" id="5.3.3.2" evidence="1"/>
<dbReference type="EMBL" id="CP000802">
    <property type="protein sequence ID" value="ABV07284.1"/>
    <property type="molecule type" value="Genomic_DNA"/>
</dbReference>
<dbReference type="RefSeq" id="WP_001192785.1">
    <property type="nucleotide sequence ID" value="NC_009800.1"/>
</dbReference>
<dbReference type="SMR" id="A8A430"/>
<dbReference type="KEGG" id="ecx:EcHS_A3048"/>
<dbReference type="HOGENOM" id="CLU_060552_2_0_6"/>
<dbReference type="UniPathway" id="UPA00059">
    <property type="reaction ID" value="UER00104"/>
</dbReference>
<dbReference type="GO" id="GO:0005737">
    <property type="term" value="C:cytoplasm"/>
    <property type="evidence" value="ECO:0007669"/>
    <property type="project" value="UniProtKB-SubCell"/>
</dbReference>
<dbReference type="GO" id="GO:0004452">
    <property type="term" value="F:isopentenyl-diphosphate delta-isomerase activity"/>
    <property type="evidence" value="ECO:0007669"/>
    <property type="project" value="UniProtKB-UniRule"/>
</dbReference>
<dbReference type="GO" id="GO:0046872">
    <property type="term" value="F:metal ion binding"/>
    <property type="evidence" value="ECO:0007669"/>
    <property type="project" value="UniProtKB-KW"/>
</dbReference>
<dbReference type="GO" id="GO:0050992">
    <property type="term" value="P:dimethylallyl diphosphate biosynthetic process"/>
    <property type="evidence" value="ECO:0007669"/>
    <property type="project" value="UniProtKB-UniRule"/>
</dbReference>
<dbReference type="GO" id="GO:0008299">
    <property type="term" value="P:isoprenoid biosynthetic process"/>
    <property type="evidence" value="ECO:0007669"/>
    <property type="project" value="UniProtKB-KW"/>
</dbReference>
<dbReference type="CDD" id="cd02885">
    <property type="entry name" value="NUDIX_IPP_Isomerase"/>
    <property type="match status" value="1"/>
</dbReference>
<dbReference type="FunFam" id="3.90.79.10:FF:000009">
    <property type="entry name" value="Isopentenyl-diphosphate Delta-isomerase"/>
    <property type="match status" value="1"/>
</dbReference>
<dbReference type="Gene3D" id="3.90.79.10">
    <property type="entry name" value="Nucleoside Triphosphate Pyrophosphohydrolase"/>
    <property type="match status" value="1"/>
</dbReference>
<dbReference type="HAMAP" id="MF_00202">
    <property type="entry name" value="Idi"/>
    <property type="match status" value="1"/>
</dbReference>
<dbReference type="InterPro" id="IPR056375">
    <property type="entry name" value="Idi_bact"/>
</dbReference>
<dbReference type="InterPro" id="IPR011876">
    <property type="entry name" value="IsopentenylPP_isomerase_typ1"/>
</dbReference>
<dbReference type="InterPro" id="IPR015797">
    <property type="entry name" value="NUDIX_hydrolase-like_dom_sf"/>
</dbReference>
<dbReference type="InterPro" id="IPR000086">
    <property type="entry name" value="NUDIX_hydrolase_dom"/>
</dbReference>
<dbReference type="NCBIfam" id="TIGR02150">
    <property type="entry name" value="IPP_isom_1"/>
    <property type="match status" value="1"/>
</dbReference>
<dbReference type="NCBIfam" id="NF002995">
    <property type="entry name" value="PRK03759.1"/>
    <property type="match status" value="1"/>
</dbReference>
<dbReference type="PANTHER" id="PTHR10885">
    <property type="entry name" value="ISOPENTENYL-DIPHOSPHATE DELTA-ISOMERASE"/>
    <property type="match status" value="1"/>
</dbReference>
<dbReference type="PANTHER" id="PTHR10885:SF0">
    <property type="entry name" value="ISOPENTENYL-DIPHOSPHATE DELTA-ISOMERASE"/>
    <property type="match status" value="1"/>
</dbReference>
<dbReference type="Pfam" id="PF00293">
    <property type="entry name" value="NUDIX"/>
    <property type="match status" value="1"/>
</dbReference>
<dbReference type="PIRSF" id="PIRSF018427">
    <property type="entry name" value="Isopntndiph_ism"/>
    <property type="match status" value="1"/>
</dbReference>
<dbReference type="SUPFAM" id="SSF55811">
    <property type="entry name" value="Nudix"/>
    <property type="match status" value="1"/>
</dbReference>
<dbReference type="PROSITE" id="PS51462">
    <property type="entry name" value="NUDIX"/>
    <property type="match status" value="1"/>
</dbReference>
<accession>A8A430</accession>
<keyword id="KW-0963">Cytoplasm</keyword>
<keyword id="KW-0413">Isomerase</keyword>
<keyword id="KW-0414">Isoprene biosynthesis</keyword>
<keyword id="KW-0460">Magnesium</keyword>
<keyword id="KW-0464">Manganese</keyword>
<keyword id="KW-0479">Metal-binding</keyword>
<proteinExistence type="inferred from homology"/>
<gene>
    <name evidence="1" type="primary">idi</name>
    <name type="ordered locus">EcHS_A3048</name>
</gene>
<organism>
    <name type="scientific">Escherichia coli O9:H4 (strain HS)</name>
    <dbReference type="NCBI Taxonomy" id="331112"/>
    <lineage>
        <taxon>Bacteria</taxon>
        <taxon>Pseudomonadati</taxon>
        <taxon>Pseudomonadota</taxon>
        <taxon>Gammaproteobacteria</taxon>
        <taxon>Enterobacterales</taxon>
        <taxon>Enterobacteriaceae</taxon>
        <taxon>Escherichia</taxon>
    </lineage>
</organism>
<reference key="1">
    <citation type="journal article" date="2008" name="J. Bacteriol.">
        <title>The pangenome structure of Escherichia coli: comparative genomic analysis of E. coli commensal and pathogenic isolates.</title>
        <authorList>
            <person name="Rasko D.A."/>
            <person name="Rosovitz M.J."/>
            <person name="Myers G.S.A."/>
            <person name="Mongodin E.F."/>
            <person name="Fricke W.F."/>
            <person name="Gajer P."/>
            <person name="Crabtree J."/>
            <person name="Sebaihia M."/>
            <person name="Thomson N.R."/>
            <person name="Chaudhuri R."/>
            <person name="Henderson I.R."/>
            <person name="Sperandio V."/>
            <person name="Ravel J."/>
        </authorList>
    </citation>
    <scope>NUCLEOTIDE SEQUENCE [LARGE SCALE GENOMIC DNA]</scope>
    <source>
        <strain>HS</strain>
    </source>
</reference>
<comment type="function">
    <text evidence="1">Catalyzes the 1,3-allylic rearrangement of the homoallylic substrate isopentenyl (IPP) to its highly electrophilic allylic isomer, dimethylallyl diphosphate (DMAPP).</text>
</comment>
<comment type="catalytic activity">
    <reaction evidence="1">
        <text>isopentenyl diphosphate = dimethylallyl diphosphate</text>
        <dbReference type="Rhea" id="RHEA:23284"/>
        <dbReference type="ChEBI" id="CHEBI:57623"/>
        <dbReference type="ChEBI" id="CHEBI:128769"/>
        <dbReference type="EC" id="5.3.3.2"/>
    </reaction>
</comment>
<comment type="cofactor">
    <cofactor evidence="1">
        <name>Mg(2+)</name>
        <dbReference type="ChEBI" id="CHEBI:18420"/>
    </cofactor>
    <text evidence="1">Binds 1 Mg(2+) ion per subunit. The magnesium ion binds only when substrate is bound.</text>
</comment>
<comment type="cofactor">
    <cofactor evidence="1">
        <name>Mn(2+)</name>
        <dbReference type="ChEBI" id="CHEBI:29035"/>
    </cofactor>
    <text evidence="1">Binds 1 Mn(2+) ion per subunit.</text>
</comment>
<comment type="pathway">
    <text evidence="1">Isoprenoid biosynthesis; dimethylallyl diphosphate biosynthesis; dimethylallyl diphosphate from isopentenyl diphosphate: step 1/1.</text>
</comment>
<comment type="subunit">
    <text evidence="1">Homodimer.</text>
</comment>
<comment type="subcellular location">
    <subcellularLocation>
        <location evidence="1">Cytoplasm</location>
    </subcellularLocation>
</comment>
<comment type="similarity">
    <text evidence="1">Belongs to the IPP isomerase type 1 family.</text>
</comment>
<name>IDI_ECOHS</name>
<evidence type="ECO:0000255" key="1">
    <source>
        <dbReference type="HAMAP-Rule" id="MF_00202"/>
    </source>
</evidence>